<organism>
    <name type="scientific">Escherichia coli O157:H7</name>
    <dbReference type="NCBI Taxonomy" id="83334"/>
    <lineage>
        <taxon>Bacteria</taxon>
        <taxon>Pseudomonadati</taxon>
        <taxon>Pseudomonadota</taxon>
        <taxon>Gammaproteobacteria</taxon>
        <taxon>Enterobacterales</taxon>
        <taxon>Enterobacteriaceae</taxon>
        <taxon>Escherichia</taxon>
    </lineage>
</organism>
<comment type="subcellular location">
    <subcellularLocation>
        <location evidence="1">Cell inner membrane</location>
        <topology evidence="1">Multi-pass membrane protein</topology>
    </subcellularLocation>
</comment>
<comment type="similarity">
    <text evidence="3">Belongs to the major facilitator superfamily. YcaD (TC 2.A.1.26) family.</text>
</comment>
<name>YCAD_ECO57</name>
<dbReference type="EMBL" id="AE005174">
    <property type="protein sequence ID" value="AAG55385.1"/>
    <property type="molecule type" value="Genomic_DNA"/>
</dbReference>
<dbReference type="EMBL" id="BA000007">
    <property type="protein sequence ID" value="BAB34406.1"/>
    <property type="molecule type" value="Genomic_DNA"/>
</dbReference>
<dbReference type="PIR" id="E85615">
    <property type="entry name" value="E85615"/>
</dbReference>
<dbReference type="PIR" id="G90751">
    <property type="entry name" value="G90751"/>
</dbReference>
<dbReference type="RefSeq" id="NP_309010.1">
    <property type="nucleotide sequence ID" value="NC_002695.1"/>
</dbReference>
<dbReference type="RefSeq" id="WP_000109295.1">
    <property type="nucleotide sequence ID" value="NZ_VOAI01000006.1"/>
</dbReference>
<dbReference type="SMR" id="Q8XEB7"/>
<dbReference type="STRING" id="155864.Z1244"/>
<dbReference type="GeneID" id="917726"/>
<dbReference type="KEGG" id="ece:Z1244"/>
<dbReference type="KEGG" id="ecs:ECs_0983"/>
<dbReference type="PATRIC" id="fig|386585.9.peg.1101"/>
<dbReference type="eggNOG" id="COG0477">
    <property type="taxonomic scope" value="Bacteria"/>
</dbReference>
<dbReference type="HOGENOM" id="CLU_035018_1_2_6"/>
<dbReference type="OMA" id="YLSHQGM"/>
<dbReference type="Proteomes" id="UP000000558">
    <property type="component" value="Chromosome"/>
</dbReference>
<dbReference type="Proteomes" id="UP000002519">
    <property type="component" value="Chromosome"/>
</dbReference>
<dbReference type="GO" id="GO:0005886">
    <property type="term" value="C:plasma membrane"/>
    <property type="evidence" value="ECO:0007669"/>
    <property type="project" value="UniProtKB-SubCell"/>
</dbReference>
<dbReference type="GO" id="GO:0022857">
    <property type="term" value="F:transmembrane transporter activity"/>
    <property type="evidence" value="ECO:0007669"/>
    <property type="project" value="UniProtKB-UniRule"/>
</dbReference>
<dbReference type="CDD" id="cd17477">
    <property type="entry name" value="MFS_YcaD_like"/>
    <property type="match status" value="1"/>
</dbReference>
<dbReference type="FunFam" id="1.20.1250.20:FF:000041">
    <property type="entry name" value="Uncharacterized MFS-type transporter YcaD"/>
    <property type="match status" value="1"/>
</dbReference>
<dbReference type="FunFam" id="1.20.1250.20:FF:000066">
    <property type="entry name" value="Uncharacterized MFS-type transporter YcaD"/>
    <property type="match status" value="1"/>
</dbReference>
<dbReference type="Gene3D" id="1.20.1250.20">
    <property type="entry name" value="MFS general substrate transporter like domains"/>
    <property type="match status" value="2"/>
</dbReference>
<dbReference type="HAMAP" id="MF_01149">
    <property type="entry name" value="MFS_YcaD"/>
    <property type="match status" value="1"/>
</dbReference>
<dbReference type="InterPro" id="IPR011701">
    <property type="entry name" value="MFS"/>
</dbReference>
<dbReference type="InterPro" id="IPR020846">
    <property type="entry name" value="MFS_dom"/>
</dbReference>
<dbReference type="InterPro" id="IPR036259">
    <property type="entry name" value="MFS_trans_sf"/>
</dbReference>
<dbReference type="InterPro" id="IPR023745">
    <property type="entry name" value="MFS_YcaD"/>
</dbReference>
<dbReference type="InterPro" id="IPR047200">
    <property type="entry name" value="MFS_YcaD-like"/>
</dbReference>
<dbReference type="NCBIfam" id="NF002962">
    <property type="entry name" value="PRK03633.1"/>
    <property type="match status" value="1"/>
</dbReference>
<dbReference type="PANTHER" id="PTHR23521">
    <property type="entry name" value="TRANSPORTER MFS SUPERFAMILY"/>
    <property type="match status" value="1"/>
</dbReference>
<dbReference type="PANTHER" id="PTHR23521:SF2">
    <property type="entry name" value="TRANSPORTER MFS SUPERFAMILY"/>
    <property type="match status" value="1"/>
</dbReference>
<dbReference type="Pfam" id="PF07690">
    <property type="entry name" value="MFS_1"/>
    <property type="match status" value="1"/>
</dbReference>
<dbReference type="SUPFAM" id="SSF103473">
    <property type="entry name" value="MFS general substrate transporter"/>
    <property type="match status" value="1"/>
</dbReference>
<dbReference type="PROSITE" id="PS50850">
    <property type="entry name" value="MFS"/>
    <property type="match status" value="1"/>
</dbReference>
<accession>Q8XEB7</accession>
<feature type="chain" id="PRO_0000084890" description="Uncharacterized MFS-type transporter YcaD">
    <location>
        <begin position="1"/>
        <end position="382"/>
    </location>
</feature>
<feature type="topological domain" description="Cytoplasmic" evidence="2">
    <location>
        <begin position="1"/>
        <end position="13"/>
    </location>
</feature>
<feature type="transmembrane region" description="Helical" evidence="2">
    <location>
        <begin position="14"/>
        <end position="34"/>
    </location>
</feature>
<feature type="topological domain" description="Periplasmic" evidence="2">
    <location>
        <begin position="35"/>
        <end position="44"/>
    </location>
</feature>
<feature type="transmembrane region" description="Helical" evidence="2">
    <location>
        <begin position="45"/>
        <end position="65"/>
    </location>
</feature>
<feature type="topological domain" description="Cytoplasmic" evidence="2">
    <location>
        <begin position="66"/>
        <end position="78"/>
    </location>
</feature>
<feature type="transmembrane region" description="Helical" evidence="2">
    <location>
        <begin position="79"/>
        <end position="99"/>
    </location>
</feature>
<feature type="topological domain" description="Periplasmic" evidence="2">
    <location>
        <begin position="100"/>
        <end position="101"/>
    </location>
</feature>
<feature type="transmembrane region" description="Helical" evidence="2">
    <location>
        <begin position="102"/>
        <end position="122"/>
    </location>
</feature>
<feature type="topological domain" description="Cytoplasmic" evidence="2">
    <location>
        <begin position="123"/>
        <end position="130"/>
    </location>
</feature>
<feature type="transmembrane region" description="Helical" evidence="2">
    <location>
        <begin position="131"/>
        <end position="151"/>
    </location>
</feature>
<feature type="topological domain" description="Periplasmic" evidence="2">
    <location>
        <begin position="152"/>
        <end position="156"/>
    </location>
</feature>
<feature type="transmembrane region" description="Helical" evidence="2">
    <location>
        <begin position="157"/>
        <end position="177"/>
    </location>
</feature>
<feature type="topological domain" description="Cytoplasmic" evidence="2">
    <location>
        <begin position="178"/>
        <end position="203"/>
    </location>
</feature>
<feature type="transmembrane region" description="Helical" evidence="2">
    <location>
        <begin position="204"/>
        <end position="224"/>
    </location>
</feature>
<feature type="topological domain" description="Periplasmic" evidence="2">
    <location>
        <begin position="225"/>
        <end position="234"/>
    </location>
</feature>
<feature type="transmembrane region" description="Helical" evidence="2">
    <location>
        <begin position="235"/>
        <end position="255"/>
    </location>
</feature>
<feature type="topological domain" description="Cytoplasmic" evidence="2">
    <location>
        <begin position="256"/>
        <end position="269"/>
    </location>
</feature>
<feature type="transmembrane region" description="Helical" evidence="2">
    <location>
        <begin position="270"/>
        <end position="290"/>
    </location>
</feature>
<feature type="transmembrane region" description="Helical" evidence="2">
    <location>
        <begin position="291"/>
        <end position="311"/>
    </location>
</feature>
<feature type="topological domain" description="Cytoplasmic" evidence="2">
    <location>
        <begin position="312"/>
        <end position="324"/>
    </location>
</feature>
<feature type="transmembrane region" description="Helical" evidence="2">
    <location>
        <begin position="325"/>
        <end position="345"/>
    </location>
</feature>
<feature type="topological domain" description="Periplasmic" evidence="2">
    <location>
        <begin position="346"/>
        <end position="347"/>
    </location>
</feature>
<feature type="transmembrane region" description="Helical" evidence="2">
    <location>
        <begin position="348"/>
        <end position="368"/>
    </location>
</feature>
<feature type="topological domain" description="Cytoplasmic" evidence="2">
    <location>
        <begin position="369"/>
        <end position="382"/>
    </location>
</feature>
<proteinExistence type="inferred from homology"/>
<reference key="1">
    <citation type="journal article" date="2001" name="Nature">
        <title>Genome sequence of enterohaemorrhagic Escherichia coli O157:H7.</title>
        <authorList>
            <person name="Perna N.T."/>
            <person name="Plunkett G. III"/>
            <person name="Burland V."/>
            <person name="Mau B."/>
            <person name="Glasner J.D."/>
            <person name="Rose D.J."/>
            <person name="Mayhew G.F."/>
            <person name="Evans P.S."/>
            <person name="Gregor J."/>
            <person name="Kirkpatrick H.A."/>
            <person name="Posfai G."/>
            <person name="Hackett J."/>
            <person name="Klink S."/>
            <person name="Boutin A."/>
            <person name="Shao Y."/>
            <person name="Miller L."/>
            <person name="Grotbeck E.J."/>
            <person name="Davis N.W."/>
            <person name="Lim A."/>
            <person name="Dimalanta E.T."/>
            <person name="Potamousis K."/>
            <person name="Apodaca J."/>
            <person name="Anantharaman T.S."/>
            <person name="Lin J."/>
            <person name="Yen G."/>
            <person name="Schwartz D.C."/>
            <person name="Welch R.A."/>
            <person name="Blattner F.R."/>
        </authorList>
    </citation>
    <scope>NUCLEOTIDE SEQUENCE [LARGE SCALE GENOMIC DNA]</scope>
    <source>
        <strain>O157:H7 / EDL933 / ATCC 700927 / EHEC</strain>
    </source>
</reference>
<reference key="2">
    <citation type="journal article" date="2001" name="DNA Res.">
        <title>Complete genome sequence of enterohemorrhagic Escherichia coli O157:H7 and genomic comparison with a laboratory strain K-12.</title>
        <authorList>
            <person name="Hayashi T."/>
            <person name="Makino K."/>
            <person name="Ohnishi M."/>
            <person name="Kurokawa K."/>
            <person name="Ishii K."/>
            <person name="Yokoyama K."/>
            <person name="Han C.-G."/>
            <person name="Ohtsubo E."/>
            <person name="Nakayama K."/>
            <person name="Murata T."/>
            <person name="Tanaka M."/>
            <person name="Tobe T."/>
            <person name="Iida T."/>
            <person name="Takami H."/>
            <person name="Honda T."/>
            <person name="Sasakawa C."/>
            <person name="Ogasawara N."/>
            <person name="Yasunaga T."/>
            <person name="Kuhara S."/>
            <person name="Shiba T."/>
            <person name="Hattori M."/>
            <person name="Shinagawa H."/>
        </authorList>
    </citation>
    <scope>NUCLEOTIDE SEQUENCE [LARGE SCALE GENOMIC DNA]</scope>
    <source>
        <strain>O157:H7 / Sakai / RIMD 0509952 / EHEC</strain>
    </source>
</reference>
<gene>
    <name type="primary">ycaD</name>
    <name type="ordered locus">Z1244</name>
    <name type="ordered locus">ECs0983</name>
</gene>
<keyword id="KW-0997">Cell inner membrane</keyword>
<keyword id="KW-1003">Cell membrane</keyword>
<keyword id="KW-0472">Membrane</keyword>
<keyword id="KW-1185">Reference proteome</keyword>
<keyword id="KW-0812">Transmembrane</keyword>
<keyword id="KW-1133">Transmembrane helix</keyword>
<keyword id="KW-0813">Transport</keyword>
<evidence type="ECO:0000250" key="1"/>
<evidence type="ECO:0000255" key="2"/>
<evidence type="ECO:0000305" key="3"/>
<sequence length="382" mass="41460">MSTYTRPVMLLLSGLLLLTLAIAVLNTLVPLWLAQEHMSTWQVGVVSSSYFTGNLVGTLLTGYVIKRIGFNRSYYLASFIFAAGCAGLGLMIGFWSWLAWRFVAGVGCAMIWVVVESALMCSGTSRNRGRLLAAYMMVYYVGTFLGQLLVSKVSTELMSVLPWVTGLTLAGILPLLFTRVLNQQAENHDSTSITSMLKLRQARLGVNGCIISGIVLGSLYGLMPLYLNHKGVSNASIGFWMAVLVSAGILGQWPIGRLADKFGRLLVLRVQVFVVILGSIAMLSQAAMAPALFILGAAGFTLYPVAMAWACEKVEHHQLVAMNQALLLSYTVGSLLGPSFTAMLMQNFSDNLLFIMIASVSFIYLLMLLRNAGHTPKPVAHV</sequence>
<protein>
    <recommendedName>
        <fullName>Uncharacterized MFS-type transporter YcaD</fullName>
    </recommendedName>
</protein>